<dbReference type="EMBL" id="CP001144">
    <property type="protein sequence ID" value="ACH73911.1"/>
    <property type="molecule type" value="Genomic_DNA"/>
</dbReference>
<dbReference type="SMR" id="B5FQI8"/>
<dbReference type="KEGG" id="sed:SeD_A2864"/>
<dbReference type="HOGENOM" id="CLU_072265_1_1_6"/>
<dbReference type="Proteomes" id="UP000008322">
    <property type="component" value="Chromosome"/>
</dbReference>
<dbReference type="GO" id="GO:0006270">
    <property type="term" value="P:DNA replication initiation"/>
    <property type="evidence" value="ECO:0007669"/>
    <property type="project" value="TreeGrafter"/>
</dbReference>
<dbReference type="GO" id="GO:0032297">
    <property type="term" value="P:negative regulation of DNA-templated DNA replication initiation"/>
    <property type="evidence" value="ECO:0007669"/>
    <property type="project" value="InterPro"/>
</dbReference>
<dbReference type="FunFam" id="1.10.8.60:FF:000024">
    <property type="entry name" value="DnaA regulatory inactivator Hda"/>
    <property type="match status" value="1"/>
</dbReference>
<dbReference type="FunFam" id="3.40.50.300:FF:000452">
    <property type="entry name" value="DnaA regulatory inactivator Hda"/>
    <property type="match status" value="1"/>
</dbReference>
<dbReference type="Gene3D" id="1.10.8.60">
    <property type="match status" value="1"/>
</dbReference>
<dbReference type="Gene3D" id="3.40.50.300">
    <property type="entry name" value="P-loop containing nucleotide triphosphate hydrolases"/>
    <property type="match status" value="1"/>
</dbReference>
<dbReference type="HAMAP" id="MF_01158">
    <property type="entry name" value="Hda"/>
    <property type="match status" value="1"/>
</dbReference>
<dbReference type="InterPro" id="IPR020591">
    <property type="entry name" value="Chromosome_initiator_DnaA-like"/>
</dbReference>
<dbReference type="InterPro" id="IPR013317">
    <property type="entry name" value="DnaA_dom"/>
</dbReference>
<dbReference type="InterPro" id="IPR017788">
    <property type="entry name" value="Hda"/>
</dbReference>
<dbReference type="InterPro" id="IPR022864">
    <property type="entry name" value="Hda_Enterobact"/>
</dbReference>
<dbReference type="InterPro" id="IPR055199">
    <property type="entry name" value="Hda_lid"/>
</dbReference>
<dbReference type="InterPro" id="IPR027417">
    <property type="entry name" value="P-loop_NTPase"/>
</dbReference>
<dbReference type="NCBIfam" id="TIGR03420">
    <property type="entry name" value="DnaA_homol_Hda"/>
    <property type="match status" value="1"/>
</dbReference>
<dbReference type="NCBIfam" id="NF005982">
    <property type="entry name" value="PRK08084.1"/>
    <property type="match status" value="1"/>
</dbReference>
<dbReference type="PANTHER" id="PTHR30050">
    <property type="entry name" value="CHROMOSOMAL REPLICATION INITIATOR PROTEIN DNAA"/>
    <property type="match status" value="1"/>
</dbReference>
<dbReference type="PANTHER" id="PTHR30050:SF5">
    <property type="entry name" value="DNAA REGULATORY INACTIVATOR HDA"/>
    <property type="match status" value="1"/>
</dbReference>
<dbReference type="Pfam" id="PF00308">
    <property type="entry name" value="Bac_DnaA"/>
    <property type="match status" value="1"/>
</dbReference>
<dbReference type="Pfam" id="PF22688">
    <property type="entry name" value="Hda_lid"/>
    <property type="match status" value="1"/>
</dbReference>
<dbReference type="PRINTS" id="PR00051">
    <property type="entry name" value="DNAA"/>
</dbReference>
<dbReference type="SUPFAM" id="SSF52540">
    <property type="entry name" value="P-loop containing nucleoside triphosphate hydrolases"/>
    <property type="match status" value="1"/>
</dbReference>
<protein>
    <recommendedName>
        <fullName evidence="2">DnaA regulatory inactivator Hda</fullName>
    </recommendedName>
</protein>
<proteinExistence type="inferred from homology"/>
<name>HDA_SALDC</name>
<keyword id="KW-0235">DNA replication</keyword>
<keyword id="KW-0236">DNA replication inhibitor</keyword>
<reference key="1">
    <citation type="journal article" date="2011" name="J. Bacteriol.">
        <title>Comparative genomics of 28 Salmonella enterica isolates: evidence for CRISPR-mediated adaptive sublineage evolution.</title>
        <authorList>
            <person name="Fricke W.F."/>
            <person name="Mammel M.K."/>
            <person name="McDermott P.F."/>
            <person name="Tartera C."/>
            <person name="White D.G."/>
            <person name="Leclerc J.E."/>
            <person name="Ravel J."/>
            <person name="Cebula T.A."/>
        </authorList>
    </citation>
    <scope>NUCLEOTIDE SEQUENCE [LARGE SCALE GENOMIC DNA]</scope>
    <source>
        <strain>CT_02021853</strain>
    </source>
</reference>
<comment type="function">
    <text evidence="1">Mediates the interaction of DNA replication initiator protein DnaA with DNA polymerase subunit beta sliding clamp (dnaN). Stimulates hydrolysis of ATP-DnaA to ADP-DnaA, rendering DnaA inactive for reinitiation, a process called regulatory inhibition of DnaA or RIDA (By similarity).</text>
</comment>
<comment type="subunit">
    <text evidence="2">The active form seems to be an ADP-bound monomer. Forms the RIDA complex (regulatory inactivation of DnaA) of ATP-DnaA, ADP-Hda and the DNA-loaded beta sliding clamp (dnaN).</text>
</comment>
<comment type="similarity">
    <text evidence="2">Belongs to the DnaA family. HdA subfamily.</text>
</comment>
<feature type="chain" id="PRO_1000137817" description="DnaA regulatory inactivator Hda">
    <location>
        <begin position="1"/>
        <end position="241"/>
    </location>
</feature>
<accession>B5FQI8</accession>
<gene>
    <name evidence="2" type="primary">hda</name>
    <name type="ordered locus">SeD_A2864</name>
</gene>
<organism>
    <name type="scientific">Salmonella dublin (strain CT_02021853)</name>
    <dbReference type="NCBI Taxonomy" id="439851"/>
    <lineage>
        <taxon>Bacteria</taxon>
        <taxon>Pseudomonadati</taxon>
        <taxon>Pseudomonadota</taxon>
        <taxon>Gammaproteobacteria</taxon>
        <taxon>Enterobacterales</taxon>
        <taxon>Enterobacteriaceae</taxon>
        <taxon>Salmonella</taxon>
    </lineage>
</organism>
<evidence type="ECO:0000250" key="1"/>
<evidence type="ECO:0000255" key="2">
    <source>
        <dbReference type="HAMAP-Rule" id="MF_01158"/>
    </source>
</evidence>
<sequence length="241" mass="27472">MSSWVEVSLNTPAQLSLPLYLPDDETFASFWPGDNASLLAALQNVLRQEHSGYIYLWAREGAGRSHLLHAACAELSQRGDAVGYVPLDKRTWFVPEVLDGMEHLSLVCIDNIECVAGDELWEMAIFDLYNRILESGKTRLLITGDRPPRQLNLGLPDLASRLDWGQIYKLQPLSDEDKLQALQLRARLRGFELPEDVGRFLLKRLDREMRTLFMTLDQLDHASITAQRKLTIPFVKEILKL</sequence>